<proteinExistence type="inferred from homology"/>
<name>FOLD_CORJK</name>
<sequence>MAATKLDGKLYRDEIFADLEQRVAALKEKGVTPGLATVLVGDDPASHSYVRMKHKDCEQIGVNSIRKDLPADVSQEELNAVIDELNADDACTGYIVQLPLPKHLDENAVLERIDPDKDADGLHPVNLGKLVLNEPAPLPCTPNGAIHLLRRFDVELNGAKVVVIGRGVTVGRPIGLMLTRRSENSTVTLCHTGTKDLAAETKAADVIVAAAGVPHMITADMVKPGAAILDVGVSRGEDGKLKGDVHPDVWDVAGAVSPNPGGVGPLTRAFLVRNVVERAEKLLRA</sequence>
<organism>
    <name type="scientific">Corynebacterium jeikeium (strain K411)</name>
    <dbReference type="NCBI Taxonomy" id="306537"/>
    <lineage>
        <taxon>Bacteria</taxon>
        <taxon>Bacillati</taxon>
        <taxon>Actinomycetota</taxon>
        <taxon>Actinomycetes</taxon>
        <taxon>Mycobacteriales</taxon>
        <taxon>Corynebacteriaceae</taxon>
        <taxon>Corynebacterium</taxon>
    </lineage>
</organism>
<protein>
    <recommendedName>
        <fullName evidence="1">Bifunctional protein FolD</fullName>
    </recommendedName>
    <domain>
        <recommendedName>
            <fullName evidence="1">Methylenetetrahydrofolate dehydrogenase</fullName>
            <ecNumber evidence="1">1.5.1.5</ecNumber>
        </recommendedName>
    </domain>
    <domain>
        <recommendedName>
            <fullName evidence="1">Methenyltetrahydrofolate cyclohydrolase</fullName>
            <ecNumber evidence="1">3.5.4.9</ecNumber>
        </recommendedName>
    </domain>
</protein>
<evidence type="ECO:0000255" key="1">
    <source>
        <dbReference type="HAMAP-Rule" id="MF_01576"/>
    </source>
</evidence>
<feature type="chain" id="PRO_0000268326" description="Bifunctional protein FolD">
    <location>
        <begin position="1"/>
        <end position="285"/>
    </location>
</feature>
<feature type="binding site" evidence="1">
    <location>
        <begin position="165"/>
        <end position="167"/>
    </location>
    <ligand>
        <name>NADP(+)</name>
        <dbReference type="ChEBI" id="CHEBI:58349"/>
    </ligand>
</feature>
<feature type="binding site" evidence="1">
    <location>
        <position position="192"/>
    </location>
    <ligand>
        <name>NADP(+)</name>
        <dbReference type="ChEBI" id="CHEBI:58349"/>
    </ligand>
</feature>
<feature type="binding site" evidence="1">
    <location>
        <position position="233"/>
    </location>
    <ligand>
        <name>NADP(+)</name>
        <dbReference type="ChEBI" id="CHEBI:58349"/>
    </ligand>
</feature>
<comment type="function">
    <text evidence="1">Catalyzes the oxidation of 5,10-methylenetetrahydrofolate to 5,10-methenyltetrahydrofolate and then the hydrolysis of 5,10-methenyltetrahydrofolate to 10-formyltetrahydrofolate.</text>
</comment>
<comment type="catalytic activity">
    <reaction evidence="1">
        <text>(6R)-5,10-methylene-5,6,7,8-tetrahydrofolate + NADP(+) = (6R)-5,10-methenyltetrahydrofolate + NADPH</text>
        <dbReference type="Rhea" id="RHEA:22812"/>
        <dbReference type="ChEBI" id="CHEBI:15636"/>
        <dbReference type="ChEBI" id="CHEBI:57455"/>
        <dbReference type="ChEBI" id="CHEBI:57783"/>
        <dbReference type="ChEBI" id="CHEBI:58349"/>
        <dbReference type="EC" id="1.5.1.5"/>
    </reaction>
</comment>
<comment type="catalytic activity">
    <reaction evidence="1">
        <text>(6R)-5,10-methenyltetrahydrofolate + H2O = (6R)-10-formyltetrahydrofolate + H(+)</text>
        <dbReference type="Rhea" id="RHEA:23700"/>
        <dbReference type="ChEBI" id="CHEBI:15377"/>
        <dbReference type="ChEBI" id="CHEBI:15378"/>
        <dbReference type="ChEBI" id="CHEBI:57455"/>
        <dbReference type="ChEBI" id="CHEBI:195366"/>
        <dbReference type="EC" id="3.5.4.9"/>
    </reaction>
</comment>
<comment type="pathway">
    <text evidence="1">One-carbon metabolism; tetrahydrofolate interconversion.</text>
</comment>
<comment type="subunit">
    <text evidence="1">Homodimer.</text>
</comment>
<comment type="similarity">
    <text evidence="1">Belongs to the tetrahydrofolate dehydrogenase/cyclohydrolase family.</text>
</comment>
<dbReference type="EC" id="1.5.1.5" evidence="1"/>
<dbReference type="EC" id="3.5.4.9" evidence="1"/>
<dbReference type="EMBL" id="CR931997">
    <property type="protein sequence ID" value="CAI37874.1"/>
    <property type="molecule type" value="Genomic_DNA"/>
</dbReference>
<dbReference type="RefSeq" id="WP_011274066.1">
    <property type="nucleotide sequence ID" value="NC_007164.1"/>
</dbReference>
<dbReference type="SMR" id="Q4JTI3"/>
<dbReference type="STRING" id="306537.jk1697"/>
<dbReference type="KEGG" id="cjk:jk1697"/>
<dbReference type="eggNOG" id="COG0190">
    <property type="taxonomic scope" value="Bacteria"/>
</dbReference>
<dbReference type="HOGENOM" id="CLU_034045_3_0_11"/>
<dbReference type="OrthoDB" id="9803580at2"/>
<dbReference type="UniPathway" id="UPA00193"/>
<dbReference type="Proteomes" id="UP000000545">
    <property type="component" value="Chromosome"/>
</dbReference>
<dbReference type="GO" id="GO:0005829">
    <property type="term" value="C:cytosol"/>
    <property type="evidence" value="ECO:0007669"/>
    <property type="project" value="TreeGrafter"/>
</dbReference>
<dbReference type="GO" id="GO:0004477">
    <property type="term" value="F:methenyltetrahydrofolate cyclohydrolase activity"/>
    <property type="evidence" value="ECO:0007669"/>
    <property type="project" value="UniProtKB-UniRule"/>
</dbReference>
<dbReference type="GO" id="GO:0004488">
    <property type="term" value="F:methylenetetrahydrofolate dehydrogenase (NADP+) activity"/>
    <property type="evidence" value="ECO:0007669"/>
    <property type="project" value="UniProtKB-UniRule"/>
</dbReference>
<dbReference type="GO" id="GO:0000105">
    <property type="term" value="P:L-histidine biosynthetic process"/>
    <property type="evidence" value="ECO:0007669"/>
    <property type="project" value="UniProtKB-KW"/>
</dbReference>
<dbReference type="GO" id="GO:0009086">
    <property type="term" value="P:methionine biosynthetic process"/>
    <property type="evidence" value="ECO:0007669"/>
    <property type="project" value="UniProtKB-KW"/>
</dbReference>
<dbReference type="GO" id="GO:0006164">
    <property type="term" value="P:purine nucleotide biosynthetic process"/>
    <property type="evidence" value="ECO:0007669"/>
    <property type="project" value="UniProtKB-KW"/>
</dbReference>
<dbReference type="GO" id="GO:0035999">
    <property type="term" value="P:tetrahydrofolate interconversion"/>
    <property type="evidence" value="ECO:0007669"/>
    <property type="project" value="UniProtKB-UniRule"/>
</dbReference>
<dbReference type="CDD" id="cd01080">
    <property type="entry name" value="NAD_bind_m-THF_DH_Cyclohyd"/>
    <property type="match status" value="1"/>
</dbReference>
<dbReference type="FunFam" id="3.40.50.10860:FF:000001">
    <property type="entry name" value="Bifunctional protein FolD"/>
    <property type="match status" value="1"/>
</dbReference>
<dbReference type="FunFam" id="3.40.50.720:FF:000094">
    <property type="entry name" value="Bifunctional protein FolD"/>
    <property type="match status" value="1"/>
</dbReference>
<dbReference type="Gene3D" id="3.40.50.10860">
    <property type="entry name" value="Leucine Dehydrogenase, chain A, domain 1"/>
    <property type="match status" value="1"/>
</dbReference>
<dbReference type="Gene3D" id="3.40.50.720">
    <property type="entry name" value="NAD(P)-binding Rossmann-like Domain"/>
    <property type="match status" value="1"/>
</dbReference>
<dbReference type="HAMAP" id="MF_01576">
    <property type="entry name" value="THF_DHG_CYH"/>
    <property type="match status" value="1"/>
</dbReference>
<dbReference type="InterPro" id="IPR046346">
    <property type="entry name" value="Aminoacid_DH-like_N_sf"/>
</dbReference>
<dbReference type="InterPro" id="IPR036291">
    <property type="entry name" value="NAD(P)-bd_dom_sf"/>
</dbReference>
<dbReference type="InterPro" id="IPR000672">
    <property type="entry name" value="THF_DH/CycHdrlase"/>
</dbReference>
<dbReference type="InterPro" id="IPR020630">
    <property type="entry name" value="THF_DH/CycHdrlase_cat_dom"/>
</dbReference>
<dbReference type="InterPro" id="IPR020631">
    <property type="entry name" value="THF_DH/CycHdrlase_NAD-bd_dom"/>
</dbReference>
<dbReference type="NCBIfam" id="NF010789">
    <property type="entry name" value="PRK14193.1"/>
    <property type="match status" value="1"/>
</dbReference>
<dbReference type="PANTHER" id="PTHR48099:SF5">
    <property type="entry name" value="C-1-TETRAHYDROFOLATE SYNTHASE, CYTOPLASMIC"/>
    <property type="match status" value="1"/>
</dbReference>
<dbReference type="PANTHER" id="PTHR48099">
    <property type="entry name" value="C-1-TETRAHYDROFOLATE SYNTHASE, CYTOPLASMIC-RELATED"/>
    <property type="match status" value="1"/>
</dbReference>
<dbReference type="Pfam" id="PF00763">
    <property type="entry name" value="THF_DHG_CYH"/>
    <property type="match status" value="1"/>
</dbReference>
<dbReference type="Pfam" id="PF02882">
    <property type="entry name" value="THF_DHG_CYH_C"/>
    <property type="match status" value="1"/>
</dbReference>
<dbReference type="PRINTS" id="PR00085">
    <property type="entry name" value="THFDHDRGNASE"/>
</dbReference>
<dbReference type="SUPFAM" id="SSF53223">
    <property type="entry name" value="Aminoacid dehydrogenase-like, N-terminal domain"/>
    <property type="match status" value="1"/>
</dbReference>
<dbReference type="SUPFAM" id="SSF51735">
    <property type="entry name" value="NAD(P)-binding Rossmann-fold domains"/>
    <property type="match status" value="1"/>
</dbReference>
<gene>
    <name evidence="1" type="primary">folD</name>
    <name type="ordered locus">jk1697</name>
</gene>
<accession>Q4JTI3</accession>
<reference key="1">
    <citation type="journal article" date="2005" name="J. Bacteriol.">
        <title>Complete genome sequence and analysis of the multiresistant nosocomial pathogen Corynebacterium jeikeium K411, a lipid-requiring bacterium of the human skin flora.</title>
        <authorList>
            <person name="Tauch A."/>
            <person name="Kaiser O."/>
            <person name="Hain T."/>
            <person name="Goesmann A."/>
            <person name="Weisshaar B."/>
            <person name="Albersmeier A."/>
            <person name="Bekel T."/>
            <person name="Bischoff N."/>
            <person name="Brune I."/>
            <person name="Chakraborty T."/>
            <person name="Kalinowski J."/>
            <person name="Meyer F."/>
            <person name="Rupp O."/>
            <person name="Schneiker S."/>
            <person name="Viehoever P."/>
            <person name="Puehler A."/>
        </authorList>
    </citation>
    <scope>NUCLEOTIDE SEQUENCE [LARGE SCALE GENOMIC DNA]</scope>
    <source>
        <strain>K411</strain>
    </source>
</reference>
<keyword id="KW-0028">Amino-acid biosynthesis</keyword>
<keyword id="KW-0368">Histidine biosynthesis</keyword>
<keyword id="KW-0378">Hydrolase</keyword>
<keyword id="KW-0486">Methionine biosynthesis</keyword>
<keyword id="KW-0511">Multifunctional enzyme</keyword>
<keyword id="KW-0521">NADP</keyword>
<keyword id="KW-0554">One-carbon metabolism</keyword>
<keyword id="KW-0560">Oxidoreductase</keyword>
<keyword id="KW-0658">Purine biosynthesis</keyword>
<keyword id="KW-1185">Reference proteome</keyword>